<name>EIF3E_BOTFB</name>
<feature type="chain" id="PRO_0000366889" description="Eukaryotic translation initiation factor 3 subunit E">
    <location>
        <begin position="1"/>
        <end position="452"/>
    </location>
</feature>
<feature type="domain" description="PCI" evidence="2">
    <location>
        <begin position="246"/>
        <end position="426"/>
    </location>
</feature>
<feature type="region of interest" description="Disordered" evidence="3">
    <location>
        <begin position="1"/>
        <end position="23"/>
    </location>
</feature>
<feature type="compositionally biased region" description="Polar residues" evidence="3">
    <location>
        <begin position="1"/>
        <end position="17"/>
    </location>
</feature>
<evidence type="ECO:0000255" key="1">
    <source>
        <dbReference type="HAMAP-Rule" id="MF_03004"/>
    </source>
</evidence>
<evidence type="ECO:0000255" key="2">
    <source>
        <dbReference type="PROSITE-ProRule" id="PRU01185"/>
    </source>
</evidence>
<evidence type="ECO:0000256" key="3">
    <source>
        <dbReference type="SAM" id="MobiDB-lite"/>
    </source>
</evidence>
<reference key="1">
    <citation type="journal article" date="2011" name="PLoS Genet.">
        <title>Genomic analysis of the necrotrophic fungal pathogens Sclerotinia sclerotiorum and Botrytis cinerea.</title>
        <authorList>
            <person name="Amselem J."/>
            <person name="Cuomo C.A."/>
            <person name="van Kan J.A.L."/>
            <person name="Viaud M."/>
            <person name="Benito E.P."/>
            <person name="Couloux A."/>
            <person name="Coutinho P.M."/>
            <person name="de Vries R.P."/>
            <person name="Dyer P.S."/>
            <person name="Fillinger S."/>
            <person name="Fournier E."/>
            <person name="Gout L."/>
            <person name="Hahn M."/>
            <person name="Kohn L."/>
            <person name="Lapalu N."/>
            <person name="Plummer K.M."/>
            <person name="Pradier J.-M."/>
            <person name="Quevillon E."/>
            <person name="Sharon A."/>
            <person name="Simon A."/>
            <person name="ten Have A."/>
            <person name="Tudzynski B."/>
            <person name="Tudzynski P."/>
            <person name="Wincker P."/>
            <person name="Andrew M."/>
            <person name="Anthouard V."/>
            <person name="Beever R.E."/>
            <person name="Beffa R."/>
            <person name="Benoit I."/>
            <person name="Bouzid O."/>
            <person name="Brault B."/>
            <person name="Chen Z."/>
            <person name="Choquer M."/>
            <person name="Collemare J."/>
            <person name="Cotton P."/>
            <person name="Danchin E.G."/>
            <person name="Da Silva C."/>
            <person name="Gautier A."/>
            <person name="Giraud C."/>
            <person name="Giraud T."/>
            <person name="Gonzalez C."/>
            <person name="Grossetete S."/>
            <person name="Gueldener U."/>
            <person name="Henrissat B."/>
            <person name="Howlett B.J."/>
            <person name="Kodira C."/>
            <person name="Kretschmer M."/>
            <person name="Lappartient A."/>
            <person name="Leroch M."/>
            <person name="Levis C."/>
            <person name="Mauceli E."/>
            <person name="Neuveglise C."/>
            <person name="Oeser B."/>
            <person name="Pearson M."/>
            <person name="Poulain J."/>
            <person name="Poussereau N."/>
            <person name="Quesneville H."/>
            <person name="Rascle C."/>
            <person name="Schumacher J."/>
            <person name="Segurens B."/>
            <person name="Sexton A."/>
            <person name="Silva E."/>
            <person name="Sirven C."/>
            <person name="Soanes D.M."/>
            <person name="Talbot N.J."/>
            <person name="Templeton M."/>
            <person name="Yandava C."/>
            <person name="Yarden O."/>
            <person name="Zeng Q."/>
            <person name="Rollins J.A."/>
            <person name="Lebrun M.-H."/>
            <person name="Dickman M."/>
        </authorList>
    </citation>
    <scope>NUCLEOTIDE SEQUENCE [LARGE SCALE GENOMIC DNA]</scope>
    <source>
        <strain>B05.10</strain>
    </source>
</reference>
<reference key="2">
    <citation type="journal article" date="2012" name="Eukaryot. Cell">
        <title>Genome update of Botrytis cinerea strains B05.10 and T4.</title>
        <authorList>
            <person name="Staats M."/>
            <person name="van Kan J.A.L."/>
        </authorList>
    </citation>
    <scope>NUCLEOTIDE SEQUENCE [LARGE SCALE GENOMIC DNA]</scope>
    <scope>GENOME REANNOTATION</scope>
    <source>
        <strain>B05.10</strain>
    </source>
</reference>
<reference key="3">
    <citation type="journal article" date="2017" name="Mol. Plant Pathol.">
        <title>A gapless genome sequence of the fungus Botrytis cinerea.</title>
        <authorList>
            <person name="van Kan J.A.L."/>
            <person name="Stassen J.H.M."/>
            <person name="Mosbach A."/>
            <person name="van der Lee T.A.J."/>
            <person name="Faino L."/>
            <person name="Farmer A.D."/>
            <person name="Papasotiriou D.G."/>
            <person name="Zhou S."/>
            <person name="Seidl M.F."/>
            <person name="Cottam E."/>
            <person name="Edel D."/>
            <person name="Hahn M."/>
            <person name="Schwartz D.C."/>
            <person name="Dietrich R.A."/>
            <person name="Widdison S."/>
            <person name="Scalliet G."/>
        </authorList>
    </citation>
    <scope>NUCLEOTIDE SEQUENCE [LARGE SCALE GENOMIC DNA]</scope>
    <scope>GENOME REANNOTATION</scope>
    <source>
        <strain>B05.10</strain>
    </source>
</reference>
<proteinExistence type="inferred from homology"/>
<gene>
    <name type="primary">int6</name>
    <name type="ORF">BC1G_13956</name>
    <name type="ORF">BCIN_02g08260</name>
</gene>
<keyword id="KW-0963">Cytoplasm</keyword>
<keyword id="KW-0396">Initiation factor</keyword>
<keyword id="KW-0648">Protein biosynthesis</keyword>
<keyword id="KW-1185">Reference proteome</keyword>
<dbReference type="EMBL" id="CP009806">
    <property type="protein sequence ID" value="ATZ47558.1"/>
    <property type="molecule type" value="Genomic_DNA"/>
</dbReference>
<dbReference type="RefSeq" id="XP_001547625.1">
    <property type="nucleotide sequence ID" value="XM_001547575.1"/>
</dbReference>
<dbReference type="SMR" id="A6SM77"/>
<dbReference type="EnsemblFungi" id="Bcin02g08260.1">
    <property type="protein sequence ID" value="Bcin02p08260.1"/>
    <property type="gene ID" value="Bcin02g08260"/>
</dbReference>
<dbReference type="GeneID" id="5428085"/>
<dbReference type="KEGG" id="bfu:BCIN_02g08260"/>
<dbReference type="VEuPathDB" id="FungiDB:Bcin02g08260"/>
<dbReference type="OMA" id="NCPWILR"/>
<dbReference type="OrthoDB" id="417252at2759"/>
<dbReference type="Proteomes" id="UP000001798">
    <property type="component" value="Chromosome bcin02"/>
</dbReference>
<dbReference type="GO" id="GO:0016282">
    <property type="term" value="C:eukaryotic 43S preinitiation complex"/>
    <property type="evidence" value="ECO:0007669"/>
    <property type="project" value="UniProtKB-UniRule"/>
</dbReference>
<dbReference type="GO" id="GO:0033290">
    <property type="term" value="C:eukaryotic 48S preinitiation complex"/>
    <property type="evidence" value="ECO:0007669"/>
    <property type="project" value="UniProtKB-UniRule"/>
</dbReference>
<dbReference type="GO" id="GO:0071540">
    <property type="term" value="C:eukaryotic translation initiation factor 3 complex, eIF3e"/>
    <property type="evidence" value="ECO:0007669"/>
    <property type="project" value="UniProtKB-UniRule"/>
</dbReference>
<dbReference type="GO" id="GO:0003743">
    <property type="term" value="F:translation initiation factor activity"/>
    <property type="evidence" value="ECO:0007669"/>
    <property type="project" value="UniProtKB-UniRule"/>
</dbReference>
<dbReference type="GO" id="GO:0001732">
    <property type="term" value="P:formation of cytoplasmic translation initiation complex"/>
    <property type="evidence" value="ECO:0007669"/>
    <property type="project" value="UniProtKB-UniRule"/>
</dbReference>
<dbReference type="CDD" id="cd21378">
    <property type="entry name" value="eIF3E"/>
    <property type="match status" value="1"/>
</dbReference>
<dbReference type="Gene3D" id="1.25.40.570">
    <property type="match status" value="1"/>
</dbReference>
<dbReference type="HAMAP" id="MF_03004">
    <property type="entry name" value="eIF3e"/>
    <property type="match status" value="1"/>
</dbReference>
<dbReference type="InterPro" id="IPR016650">
    <property type="entry name" value="eIF3e"/>
</dbReference>
<dbReference type="InterPro" id="IPR019010">
    <property type="entry name" value="eIF3e_N"/>
</dbReference>
<dbReference type="InterPro" id="IPR000717">
    <property type="entry name" value="PCI_dom"/>
</dbReference>
<dbReference type="InterPro" id="IPR036390">
    <property type="entry name" value="WH_DNA-bd_sf"/>
</dbReference>
<dbReference type="PANTHER" id="PTHR10317">
    <property type="entry name" value="EUKARYOTIC TRANSLATION INITIATION FACTOR 3 SUBUNIT E"/>
    <property type="match status" value="1"/>
</dbReference>
<dbReference type="Pfam" id="PF09440">
    <property type="entry name" value="eIF3_N"/>
    <property type="match status" value="1"/>
</dbReference>
<dbReference type="Pfam" id="PF21357">
    <property type="entry name" value="EIF3E_C"/>
    <property type="match status" value="1"/>
</dbReference>
<dbReference type="Pfam" id="PF01399">
    <property type="entry name" value="PCI"/>
    <property type="match status" value="1"/>
</dbReference>
<dbReference type="PIRSF" id="PIRSF016255">
    <property type="entry name" value="eIF3e_su6"/>
    <property type="match status" value="1"/>
</dbReference>
<dbReference type="SMART" id="SM01186">
    <property type="entry name" value="eIF3_N"/>
    <property type="match status" value="1"/>
</dbReference>
<dbReference type="SMART" id="SM00088">
    <property type="entry name" value="PINT"/>
    <property type="match status" value="1"/>
</dbReference>
<dbReference type="SUPFAM" id="SSF46785">
    <property type="entry name" value="Winged helix' DNA-binding domain"/>
    <property type="match status" value="1"/>
</dbReference>
<dbReference type="PROSITE" id="PS50250">
    <property type="entry name" value="PCI"/>
    <property type="match status" value="1"/>
</dbReference>
<comment type="function">
    <text evidence="1">Component of the eukaryotic translation initiation factor 3 (eIF-3) complex, which is involved in protein synthesis of a specialized repertoire of mRNAs and, together with other initiation factors, stimulates binding of mRNA and methionyl-tRNAi to the 40S ribosome. The eIF-3 complex specifically targets and initiates translation of a subset of mRNAs involved in cell proliferation.</text>
</comment>
<comment type="subunit">
    <text evidence="1">Component of the eukaryotic translation initiation factor 3 (eIF-3) complex.</text>
</comment>
<comment type="subcellular location">
    <subcellularLocation>
        <location evidence="1">Cytoplasm</location>
    </subcellularLocation>
</comment>
<comment type="similarity">
    <text evidence="1">Belongs to the eIF-3 subunit E family.</text>
</comment>
<organism>
    <name type="scientific">Botryotinia fuckeliana (strain B05.10)</name>
    <name type="common">Noble rot fungus</name>
    <name type="synonym">Botrytis cinerea</name>
    <dbReference type="NCBI Taxonomy" id="332648"/>
    <lineage>
        <taxon>Eukaryota</taxon>
        <taxon>Fungi</taxon>
        <taxon>Dikarya</taxon>
        <taxon>Ascomycota</taxon>
        <taxon>Pezizomycotina</taxon>
        <taxon>Leotiomycetes</taxon>
        <taxon>Helotiales</taxon>
        <taxon>Sclerotiniaceae</taxon>
        <taxon>Botrytis</taxon>
    </lineage>
</organism>
<sequence>MADNTPTTANDLLNDATQAAAKSPEEIAKENDLLPKLITHLDRHLIFPLLQFVGDQDDEPSPEITKAKFELLKKTNMTDYVASLHCEIEGVDEAPKEYANKRQEILQRLEIFGQESEKITDLLGREDVVTGLRSDKVANLEFLKKEHDVTIEMVNVLYDFGNFQYSCGNYGAAAELLYQFRVLSTDDDKVTAATWGKLACEILTGNWESAMEEVQKVKESIETKLFNKPLAQLHHRTWLIHWALFPFFNHEPARDVICDLFFSPAFINTIQTACPWILRYLTAAVITNRNRTRNTGQYQKQLKDIIRIVKQENYEYSDPVTDFIKALYLDFDFEEAQKKLSEAEEVLRSDFFLVAASENFVEAARHLISESYCKIHQRIDIKDLSARLGLNQDDGEKWIVNLIRDTRVDAKIDYKEGTVVMNHPPSSVYQQVIERTKGGFFRTQVLSAAVAK</sequence>
<protein>
    <recommendedName>
        <fullName evidence="1">Eukaryotic translation initiation factor 3 subunit E</fullName>
        <shortName evidence="1">eIF3e</shortName>
    </recommendedName>
</protein>
<accession>A6SM77</accession>
<accession>A0A384JA65</accession>